<evidence type="ECO:0000255" key="1"/>
<evidence type="ECO:0000255" key="2">
    <source>
        <dbReference type="PROSITE-ProRule" id="PRU00108"/>
    </source>
</evidence>
<evidence type="ECO:0000255" key="3">
    <source>
        <dbReference type="PROSITE-ProRule" id="PRU00197"/>
    </source>
</evidence>
<evidence type="ECO:0000256" key="4">
    <source>
        <dbReference type="SAM" id="MobiDB-lite"/>
    </source>
</evidence>
<evidence type="ECO:0000269" key="5">
    <source>
    </source>
</evidence>
<evidence type="ECO:0000269" key="6">
    <source>
    </source>
</evidence>
<evidence type="ECO:0000269" key="7">
    <source>
    </source>
</evidence>
<evidence type="ECO:0000269" key="8">
    <source>
    </source>
</evidence>
<evidence type="ECO:0000269" key="9">
    <source>
    </source>
</evidence>
<evidence type="ECO:0000269" key="10">
    <source>
    </source>
</evidence>
<evidence type="ECO:0000269" key="11">
    <source>
    </source>
</evidence>
<evidence type="ECO:0000303" key="12">
    <source>
    </source>
</evidence>
<evidence type="ECO:0000303" key="13">
    <source>
    </source>
</evidence>
<evidence type="ECO:0000303" key="14">
    <source>
    </source>
</evidence>
<evidence type="ECO:0000305" key="15"/>
<evidence type="ECO:0000312" key="16">
    <source>
        <dbReference type="Araport" id="AT1G73360"/>
    </source>
</evidence>
<evidence type="ECO:0000312" key="17">
    <source>
        <dbReference type="EMBL" id="AAG30978.1"/>
    </source>
</evidence>
<comment type="function">
    <text evidence="5 6 7 8 9 10 11">Transcription factor which acts as a positive regulator of drought stress tolerance. Can transactivate CIPK3, NCED3 and ERECTA (PubMed:18451323). Transactivates several cell-wall-loosening protein genes by directly binding to HD motifs in their promoters. These target genes play important roles in coordinating cell-wall extensibility with root development and growth (PubMed:24821957). Transactivates CYP74A/AOS, AOC3, OPR3 and 4CLL5/OPCL1 genes by directly binding to HD motifs in their promoters. These target genes are involved in jasmonate (JA) biosynthesis, and JA signaling affects root architecture by activating auxin signaling, which promotes lateral root formation (PubMed:25752924). Acts as a negative regulator of trichome branching (PubMed:16778018, PubMed:24824485). Required for the establishment of giant cell identity on the abaxial side of sepals (PubMed:23095885). Seems to promote cell differentiation (PubMed:25564655). May regulate cell differentiation and proliferation during root and shoot meristem development (PubMed:25564655).</text>
</comment>
<comment type="subunit">
    <text evidence="10">Interacts with BBM.</text>
</comment>
<comment type="interaction">
    <interactant intactId="EBI-4443010">
        <id>Q9FX31</id>
    </interactant>
    <interactant intactId="EBI-4450571">
        <id>Q8L7H4</id>
        <label>HDG4</label>
    </interactant>
    <organismsDiffer>false</organismsDiffer>
    <experiments>2</experiments>
</comment>
<comment type="subcellular location">
    <subcellularLocation>
        <location evidence="2 6">Nucleus</location>
    </subcellularLocation>
</comment>
<comment type="tissue specificity">
    <text evidence="5">Expressed in apical meristems and young epidermal tissue including trichomes and stipules. Expressed in lateral root tips, the L1 layer of apical inflorescence meristems and early flower primordia, carpel and petal epidermis, stigma papillae, ovule primordia, nucellus and embryo.</text>
</comment>
<comment type="developmental stage">
    <text evidence="10">During embryo development, expressed in all cells at the 4- and 16-cell embryo stages (PubMed:25564655). Expression is restricted to the protoderm from the globular stage onward (PubMed:25564655). In primary and lateral roots, observed in the epidermis, the outer layer of columella cells and lateral root cap (PubMed:25564655).</text>
</comment>
<comment type="disruption phenotype">
    <text evidence="5 9 10">Plants show excess branching of trichomes (PubMed:16778018, PubMed:24824485). In plants missing HDG3, HDG7, HDG11, PDF2 and ATML1, increased cell division leading to cell overproliferation (PubMed:25564655).</text>
</comment>
<comment type="miscellaneous">
    <text evidence="6">The gain-of-function mutant edt1 (T-DNA tagging) exhibit enhanced drought tolerance, increased root system development, reduced leaf stomatal density, increased levels of abscisic acid and prolamine, increased resistance to oxidative stress and high levels of superoxide dismutase.</text>
</comment>
<comment type="similarity">
    <text evidence="15">Belongs to the HD-ZIP homeobox family. Class IV subfamily.</text>
</comment>
<name>HDG11_ARATH</name>
<keyword id="KW-0175">Coiled coil</keyword>
<keyword id="KW-0238">DNA-binding</keyword>
<keyword id="KW-0371">Homeobox</keyword>
<keyword id="KW-0539">Nucleus</keyword>
<keyword id="KW-1185">Reference proteome</keyword>
<keyword id="KW-0804">Transcription</keyword>
<keyword id="KW-0805">Transcription regulation</keyword>
<sequence length="722" mass="79120">MSFVVGVGGSGSGSGGDGGGSHHHDGSETDRKKKRYHRHTAQQIQRLESSFKECPHPDEKQRNQLSRELGLAPRQIKFWFQNRRTQLKAQHERADNSALKAENDKIRCENIAIREALKHAICPNCGGPPVSEDPYFDEQKLRIENAHLREELERMSTIASKYMGRPISQLSTLHPMHISPLDLSMTSLTGCGPFGHGPSLDFDLLPGSSMAVGPNNNLQSQPNLAISDMDKPIMTGIALTAMEELLRLLQTNEPLWTRTDGCRDILNLGSYENVFPRSSNRGKNQNFRVEASRSSGIVFMNAMALVDMFMDCVKWTELFPSIIAASKTLAVISSGMGGTHEGALHLLYEEMEVLSPLVATREFCELRYCQQTEQGSWIVVNVSYDLPQFVSHSQSYRFPSGCLIQDMPNGYSKVTWVEHIETEEKELVHELYREIIHRGIAFGADRWVTTLQRMCERFASLSVPASSSRDLGGVILSPEGKRSMMRLAQRMISNYCLSVSRSNNTRSTVVSELNEVGIRVTAHKSPEPNGTVLCAATTFWLPNSPQNVFNFLKDERTRPQWDVLSNGNAVQEVAHISNGSHPGNCISVLRGSNATHSNNMLILQESSTDSSGAFVVYSPVDLAALNIAMSGEDPSYIPLLSSGFTISPDGNGSNSEQGGASTSSGRASASGSLITVGFQIMVSNLPTAKLNMESVETVNNLIGTTVHQIKTALSGPTASTTA</sequence>
<reference key="1">
    <citation type="journal article" date="2000" name="Nature">
        <title>Sequence and analysis of chromosome 1 of the plant Arabidopsis thaliana.</title>
        <authorList>
            <person name="Theologis A."/>
            <person name="Ecker J.R."/>
            <person name="Palm C.J."/>
            <person name="Federspiel N.A."/>
            <person name="Kaul S."/>
            <person name="White O."/>
            <person name="Alonso J."/>
            <person name="Altafi H."/>
            <person name="Araujo R."/>
            <person name="Bowman C.L."/>
            <person name="Brooks S.Y."/>
            <person name="Buehler E."/>
            <person name="Chan A."/>
            <person name="Chao Q."/>
            <person name="Chen H."/>
            <person name="Cheuk R.F."/>
            <person name="Chin C.W."/>
            <person name="Chung M.K."/>
            <person name="Conn L."/>
            <person name="Conway A.B."/>
            <person name="Conway A.R."/>
            <person name="Creasy T.H."/>
            <person name="Dewar K."/>
            <person name="Dunn P."/>
            <person name="Etgu P."/>
            <person name="Feldblyum T.V."/>
            <person name="Feng J.-D."/>
            <person name="Fong B."/>
            <person name="Fujii C.Y."/>
            <person name="Gill J.E."/>
            <person name="Goldsmith A.D."/>
            <person name="Haas B."/>
            <person name="Hansen N.F."/>
            <person name="Hughes B."/>
            <person name="Huizar L."/>
            <person name="Hunter J.L."/>
            <person name="Jenkins J."/>
            <person name="Johnson-Hopson C."/>
            <person name="Khan S."/>
            <person name="Khaykin E."/>
            <person name="Kim C.J."/>
            <person name="Koo H.L."/>
            <person name="Kremenetskaia I."/>
            <person name="Kurtz D.B."/>
            <person name="Kwan A."/>
            <person name="Lam B."/>
            <person name="Langin-Hooper S."/>
            <person name="Lee A."/>
            <person name="Lee J.M."/>
            <person name="Lenz C.A."/>
            <person name="Li J.H."/>
            <person name="Li Y.-P."/>
            <person name="Lin X."/>
            <person name="Liu S.X."/>
            <person name="Liu Z.A."/>
            <person name="Luros J.S."/>
            <person name="Maiti R."/>
            <person name="Marziali A."/>
            <person name="Militscher J."/>
            <person name="Miranda M."/>
            <person name="Nguyen M."/>
            <person name="Nierman W.C."/>
            <person name="Osborne B.I."/>
            <person name="Pai G."/>
            <person name="Peterson J."/>
            <person name="Pham P.K."/>
            <person name="Rizzo M."/>
            <person name="Rooney T."/>
            <person name="Rowley D."/>
            <person name="Sakano H."/>
            <person name="Salzberg S.L."/>
            <person name="Schwartz J.R."/>
            <person name="Shinn P."/>
            <person name="Southwick A.M."/>
            <person name="Sun H."/>
            <person name="Tallon L.J."/>
            <person name="Tambunga G."/>
            <person name="Toriumi M.J."/>
            <person name="Town C.D."/>
            <person name="Utterback T."/>
            <person name="Van Aken S."/>
            <person name="Vaysberg M."/>
            <person name="Vysotskaia V.S."/>
            <person name="Walker M."/>
            <person name="Wu D."/>
            <person name="Yu G."/>
            <person name="Fraser C.M."/>
            <person name="Venter J.C."/>
            <person name="Davis R.W."/>
        </authorList>
    </citation>
    <scope>NUCLEOTIDE SEQUENCE [LARGE SCALE GENOMIC DNA]</scope>
    <source>
        <strain>cv. Columbia</strain>
    </source>
</reference>
<reference key="2">
    <citation type="journal article" date="2017" name="Plant J.">
        <title>Araport11: a complete reannotation of the Arabidopsis thaliana reference genome.</title>
        <authorList>
            <person name="Cheng C.Y."/>
            <person name="Krishnakumar V."/>
            <person name="Chan A.P."/>
            <person name="Thibaud-Nissen F."/>
            <person name="Schobel S."/>
            <person name="Town C.D."/>
        </authorList>
    </citation>
    <scope>GENOME REANNOTATION</scope>
    <source>
        <strain>cv. Columbia</strain>
    </source>
</reference>
<reference key="3">
    <citation type="journal article" date="2003" name="Science">
        <title>Empirical analysis of transcriptional activity in the Arabidopsis genome.</title>
        <authorList>
            <person name="Yamada K."/>
            <person name="Lim J."/>
            <person name="Dale J.M."/>
            <person name="Chen H."/>
            <person name="Shinn P."/>
            <person name="Palm C.J."/>
            <person name="Southwick A.M."/>
            <person name="Wu H.C."/>
            <person name="Kim C.J."/>
            <person name="Nguyen M."/>
            <person name="Pham P.K."/>
            <person name="Cheuk R.F."/>
            <person name="Karlin-Newmann G."/>
            <person name="Liu S.X."/>
            <person name="Lam B."/>
            <person name="Sakano H."/>
            <person name="Wu T."/>
            <person name="Yu G."/>
            <person name="Miranda M."/>
            <person name="Quach H.L."/>
            <person name="Tripp M."/>
            <person name="Chang C.H."/>
            <person name="Lee J.M."/>
            <person name="Toriumi M.J."/>
            <person name="Chan M.M."/>
            <person name="Tang C.C."/>
            <person name="Onodera C.S."/>
            <person name="Deng J.M."/>
            <person name="Akiyama K."/>
            <person name="Ansari Y."/>
            <person name="Arakawa T."/>
            <person name="Banh J."/>
            <person name="Banno F."/>
            <person name="Bowser L."/>
            <person name="Brooks S.Y."/>
            <person name="Carninci P."/>
            <person name="Chao Q."/>
            <person name="Choy N."/>
            <person name="Enju A."/>
            <person name="Goldsmith A.D."/>
            <person name="Gurjal M."/>
            <person name="Hansen N.F."/>
            <person name="Hayashizaki Y."/>
            <person name="Johnson-Hopson C."/>
            <person name="Hsuan V.W."/>
            <person name="Iida K."/>
            <person name="Karnes M."/>
            <person name="Khan S."/>
            <person name="Koesema E."/>
            <person name="Ishida J."/>
            <person name="Jiang P.X."/>
            <person name="Jones T."/>
            <person name="Kawai J."/>
            <person name="Kamiya A."/>
            <person name="Meyers C."/>
            <person name="Nakajima M."/>
            <person name="Narusaka M."/>
            <person name="Seki M."/>
            <person name="Sakurai T."/>
            <person name="Satou M."/>
            <person name="Tamse R."/>
            <person name="Vaysberg M."/>
            <person name="Wallender E.K."/>
            <person name="Wong C."/>
            <person name="Yamamura Y."/>
            <person name="Yuan S."/>
            <person name="Shinozaki K."/>
            <person name="Davis R.W."/>
            <person name="Theologis A."/>
            <person name="Ecker J.R."/>
        </authorList>
    </citation>
    <scope>NUCLEOTIDE SEQUENCE [LARGE SCALE MRNA]</scope>
    <source>
        <strain>cv. Columbia</strain>
    </source>
</reference>
<reference key="4">
    <citation type="journal article" date="2000" name="Plant Mol. Biol.">
        <title>Organization and structural evolution of four multigene families in Arabidopsis thaliana: AtLCAD, AtLGT, AtMYST and AtHD-GL2.</title>
        <authorList>
            <person name="Tavares R."/>
            <person name="Aubourg S."/>
            <person name="Lecharny A."/>
            <person name="Kreis M."/>
        </authorList>
    </citation>
    <scope>GENE FAMILY</scope>
</reference>
<reference key="5">
    <citation type="journal article" date="2006" name="Plant Physiol.">
        <title>Characterization of the class IV homeodomain-leucine zipper gene family in Arabidopsis.</title>
        <authorList>
            <person name="Nakamura M."/>
            <person name="Katsumata H."/>
            <person name="Abe M."/>
            <person name="Yabe N."/>
            <person name="Komeda Y."/>
            <person name="Yamamoto K.T."/>
            <person name="Takahashi T."/>
        </authorList>
    </citation>
    <scope>FUNCTION</scope>
    <scope>TISSUE SPECIFICITY</scope>
    <scope>GENE FAMILY</scope>
    <scope>NOMENCLATURE</scope>
    <scope>DISRUPTION PHENOTYPE</scope>
</reference>
<reference key="6">
    <citation type="journal article" date="2008" name="Plant Cell">
        <title>Activated expression of an Arabidopsis HD-START protein confers drought tolerance with improved root system and reduced stomatal density.</title>
        <authorList>
            <person name="Yu H."/>
            <person name="Chen X."/>
            <person name="Hong Y.Y."/>
            <person name="Wang Y."/>
            <person name="Xu P."/>
            <person name="Ke S.D."/>
            <person name="Liu H.Y."/>
            <person name="Zhu J.K."/>
            <person name="Oliver D.J."/>
            <person name="Xiang C.B."/>
        </authorList>
    </citation>
    <scope>FUNCTION</scope>
    <scope>SUBCELLULAR LOCATION</scope>
</reference>
<reference key="7">
    <citation type="journal article" date="2012" name="Development">
        <title>Cell cycle regulates cell type in the Arabidopsis sepal.</title>
        <authorList>
            <person name="Roeder A.H.K."/>
            <person name="Cunha A."/>
            <person name="Ohno C.K."/>
            <person name="Meyerowitz E.M."/>
        </authorList>
    </citation>
    <scope>FUNCTION</scope>
</reference>
<reference key="8">
    <citation type="journal article" date="2014" name="J. Exp. Bot.">
        <title>HDG11 upregulates cell-wall-loosening protein genes to promote root elongation in Arabidopsis.</title>
        <authorList>
            <person name="Xu P."/>
            <person name="Cai X.T."/>
            <person name="Wang Y."/>
            <person name="Xing L."/>
            <person name="Chen Q."/>
            <person name="Xiang C.B."/>
        </authorList>
    </citation>
    <scope>FUNCTION</scope>
</reference>
<reference key="9">
    <citation type="journal article" date="2014" name="Plant Cell">
        <title>HD-ZIP proteins GL2 and HDG11 have redundant functions in Arabidopsis trichomes, and GL2 activates a positive feedback loop via MYB23.</title>
        <authorList>
            <person name="Khosla A."/>
            <person name="Paper J.M."/>
            <person name="Boehler A.P."/>
            <person name="Bradley A.M."/>
            <person name="Neumann T.R."/>
            <person name="Schrick K."/>
        </authorList>
    </citation>
    <scope>FUNCTION</scope>
</reference>
<reference key="10">
    <citation type="journal article" date="2015" name="Development">
        <title>AIL and HDG proteins act antagonistically to control cell proliferation.</title>
        <authorList>
            <person name="Horstman A."/>
            <person name="Fukuoka H."/>
            <person name="Muino J.M."/>
            <person name="Nitsch L."/>
            <person name="Guo C."/>
            <person name="Passarinho P."/>
            <person name="Sanchez-Perez G."/>
            <person name="Immink R."/>
            <person name="Angenent G."/>
            <person name="Boutilier K."/>
        </authorList>
    </citation>
    <scope>FUNCTION</scope>
    <scope>DISRUPTION PHENOTYPE</scope>
    <scope>DEVELOPMENTAL STAGE</scope>
    <scope>INTERACTION WITH BBM</scope>
    <source>
        <strain>cv. Columbia</strain>
    </source>
</reference>
<reference key="11">
    <citation type="journal article" date="2015" name="J. Integr. Plant Biol.">
        <title>Activated expression of AtEDT1/HDG11 promotes lateral root formation in Arabidopsis mutant edt1 by upregulating jasmonate biosynthesis.</title>
        <authorList>
            <person name="Cai X.T."/>
            <person name="Xu P."/>
            <person name="Wang Y."/>
            <person name="Xiang C.B."/>
        </authorList>
    </citation>
    <scope>FUNCTION</scope>
</reference>
<proteinExistence type="evidence at protein level"/>
<dbReference type="EMBL" id="AC012396">
    <property type="protein sequence ID" value="AAG30978.1"/>
    <property type="molecule type" value="Genomic_DNA"/>
</dbReference>
<dbReference type="EMBL" id="CP002684">
    <property type="protein sequence ID" value="AEE35449.1"/>
    <property type="molecule type" value="Genomic_DNA"/>
</dbReference>
<dbReference type="EMBL" id="BT003979">
    <property type="protein sequence ID" value="AAO42020.1"/>
    <property type="molecule type" value="mRNA"/>
</dbReference>
<dbReference type="EMBL" id="BT004915">
    <property type="protein sequence ID" value="AAO50448.1"/>
    <property type="molecule type" value="mRNA"/>
</dbReference>
<dbReference type="PIR" id="B96760">
    <property type="entry name" value="B96760"/>
</dbReference>
<dbReference type="RefSeq" id="NP_177479.1">
    <property type="nucleotide sequence ID" value="NM_105996.4"/>
</dbReference>
<dbReference type="SMR" id="Q9FX31"/>
<dbReference type="BioGRID" id="28890">
    <property type="interactions" value="4"/>
</dbReference>
<dbReference type="FunCoup" id="Q9FX31">
    <property type="interactions" value="525"/>
</dbReference>
<dbReference type="IntAct" id="Q9FX31">
    <property type="interactions" value="7"/>
</dbReference>
<dbReference type="STRING" id="3702.Q9FX31"/>
<dbReference type="GlyGen" id="Q9FX31">
    <property type="glycosylation" value="1 site"/>
</dbReference>
<dbReference type="MetOSite" id="Q9FX31"/>
<dbReference type="PaxDb" id="3702-AT1G73360.1"/>
<dbReference type="ProteomicsDB" id="230291"/>
<dbReference type="EnsemblPlants" id="AT1G73360.1">
    <property type="protein sequence ID" value="AT1G73360.1"/>
    <property type="gene ID" value="AT1G73360"/>
</dbReference>
<dbReference type="GeneID" id="843671"/>
<dbReference type="Gramene" id="AT1G73360.1">
    <property type="protein sequence ID" value="AT1G73360.1"/>
    <property type="gene ID" value="AT1G73360"/>
</dbReference>
<dbReference type="KEGG" id="ath:AT1G73360"/>
<dbReference type="Araport" id="AT1G73360"/>
<dbReference type="TAIR" id="AT1G73360">
    <property type="gene designation" value="HDG11"/>
</dbReference>
<dbReference type="eggNOG" id="ENOG502QQXM">
    <property type="taxonomic scope" value="Eukaryota"/>
</dbReference>
<dbReference type="HOGENOM" id="CLU_015002_2_1_1"/>
<dbReference type="InParanoid" id="Q9FX31"/>
<dbReference type="OMA" id="PHPGNCI"/>
<dbReference type="PhylomeDB" id="Q9FX31"/>
<dbReference type="PRO" id="PR:Q9FX31"/>
<dbReference type="Proteomes" id="UP000006548">
    <property type="component" value="Chromosome 1"/>
</dbReference>
<dbReference type="ExpressionAtlas" id="Q9FX31">
    <property type="expression patterns" value="baseline and differential"/>
</dbReference>
<dbReference type="GO" id="GO:0005634">
    <property type="term" value="C:nucleus"/>
    <property type="evidence" value="ECO:0000314"/>
    <property type="project" value="TAIR"/>
</dbReference>
<dbReference type="GO" id="GO:0003700">
    <property type="term" value="F:DNA-binding transcription factor activity"/>
    <property type="evidence" value="ECO:0000314"/>
    <property type="project" value="TAIR"/>
</dbReference>
<dbReference type="GO" id="GO:0000981">
    <property type="term" value="F:DNA-binding transcription factor activity, RNA polymerase II-specific"/>
    <property type="evidence" value="ECO:0007669"/>
    <property type="project" value="InterPro"/>
</dbReference>
<dbReference type="GO" id="GO:0008289">
    <property type="term" value="F:lipid binding"/>
    <property type="evidence" value="ECO:0007669"/>
    <property type="project" value="InterPro"/>
</dbReference>
<dbReference type="GO" id="GO:0000976">
    <property type="term" value="F:transcription cis-regulatory region binding"/>
    <property type="evidence" value="ECO:0000353"/>
    <property type="project" value="TAIR"/>
</dbReference>
<dbReference type="GO" id="GO:0030154">
    <property type="term" value="P:cell differentiation"/>
    <property type="evidence" value="ECO:0000315"/>
    <property type="project" value="UniProtKB"/>
</dbReference>
<dbReference type="GO" id="GO:0009828">
    <property type="term" value="P:plant-type cell wall loosening"/>
    <property type="evidence" value="ECO:0000315"/>
    <property type="project" value="TAIR"/>
</dbReference>
<dbReference type="GO" id="GO:0010091">
    <property type="term" value="P:trichome branching"/>
    <property type="evidence" value="ECO:0000315"/>
    <property type="project" value="TAIR"/>
</dbReference>
<dbReference type="CDD" id="cd00086">
    <property type="entry name" value="homeodomain"/>
    <property type="match status" value="1"/>
</dbReference>
<dbReference type="CDD" id="cd08875">
    <property type="entry name" value="START_ArGLABRA2_like"/>
    <property type="match status" value="1"/>
</dbReference>
<dbReference type="FunFam" id="3.30.530.20:FF:000026">
    <property type="entry name" value="Homeobox-leucine zipper protein GLABRA 2"/>
    <property type="match status" value="1"/>
</dbReference>
<dbReference type="FunFam" id="1.10.10.60:FF:000229">
    <property type="entry name" value="Homeobox-leucine zipper protein HDG1"/>
    <property type="match status" value="1"/>
</dbReference>
<dbReference type="Gene3D" id="3.30.530.20">
    <property type="match status" value="1"/>
</dbReference>
<dbReference type="Gene3D" id="1.10.10.60">
    <property type="entry name" value="Homeodomain-like"/>
    <property type="match status" value="1"/>
</dbReference>
<dbReference type="InterPro" id="IPR042160">
    <property type="entry name" value="GLABRA2/ANL2/PDF2/ATML1-like"/>
</dbReference>
<dbReference type="InterPro" id="IPR001356">
    <property type="entry name" value="HD"/>
</dbReference>
<dbReference type="InterPro" id="IPR017970">
    <property type="entry name" value="Homeobox_CS"/>
</dbReference>
<dbReference type="InterPro" id="IPR009057">
    <property type="entry name" value="Homeodomain-like_sf"/>
</dbReference>
<dbReference type="InterPro" id="IPR023393">
    <property type="entry name" value="START-like_dom_sf"/>
</dbReference>
<dbReference type="InterPro" id="IPR002913">
    <property type="entry name" value="START_lipid-bd_dom"/>
</dbReference>
<dbReference type="PANTHER" id="PTHR45654:SF1">
    <property type="entry name" value="HOMEOBOX-LEUCINE ZIPPER PROTEIN HDG11"/>
    <property type="match status" value="1"/>
</dbReference>
<dbReference type="PANTHER" id="PTHR45654">
    <property type="entry name" value="HOMEOBOX-LEUCINE ZIPPER PROTEIN MERISTEM L1"/>
    <property type="match status" value="1"/>
</dbReference>
<dbReference type="Pfam" id="PF00046">
    <property type="entry name" value="Homeodomain"/>
    <property type="match status" value="1"/>
</dbReference>
<dbReference type="Pfam" id="PF01852">
    <property type="entry name" value="START"/>
    <property type="match status" value="1"/>
</dbReference>
<dbReference type="SMART" id="SM00389">
    <property type="entry name" value="HOX"/>
    <property type="match status" value="1"/>
</dbReference>
<dbReference type="SMART" id="SM00234">
    <property type="entry name" value="START"/>
    <property type="match status" value="1"/>
</dbReference>
<dbReference type="SUPFAM" id="SSF55961">
    <property type="entry name" value="Bet v1-like"/>
    <property type="match status" value="2"/>
</dbReference>
<dbReference type="SUPFAM" id="SSF46689">
    <property type="entry name" value="Homeodomain-like"/>
    <property type="match status" value="1"/>
</dbReference>
<dbReference type="PROSITE" id="PS00027">
    <property type="entry name" value="HOMEOBOX_1"/>
    <property type="match status" value="1"/>
</dbReference>
<dbReference type="PROSITE" id="PS50071">
    <property type="entry name" value="HOMEOBOX_2"/>
    <property type="match status" value="1"/>
</dbReference>
<dbReference type="PROSITE" id="PS50848">
    <property type="entry name" value="START"/>
    <property type="match status" value="1"/>
</dbReference>
<gene>
    <name evidence="13" type="primary">HDG11</name>
    <name evidence="14" type="synonym">EDT1</name>
    <name evidence="12" type="synonym">HDGL2-11</name>
    <name evidence="16" type="ordered locus">At1g73360</name>
    <name evidence="17" type="ORF">T9L24.43</name>
</gene>
<organism>
    <name type="scientific">Arabidopsis thaliana</name>
    <name type="common">Mouse-ear cress</name>
    <dbReference type="NCBI Taxonomy" id="3702"/>
    <lineage>
        <taxon>Eukaryota</taxon>
        <taxon>Viridiplantae</taxon>
        <taxon>Streptophyta</taxon>
        <taxon>Embryophyta</taxon>
        <taxon>Tracheophyta</taxon>
        <taxon>Spermatophyta</taxon>
        <taxon>Magnoliopsida</taxon>
        <taxon>eudicotyledons</taxon>
        <taxon>Gunneridae</taxon>
        <taxon>Pentapetalae</taxon>
        <taxon>rosids</taxon>
        <taxon>malvids</taxon>
        <taxon>Brassicales</taxon>
        <taxon>Brassicaceae</taxon>
        <taxon>Camelineae</taxon>
        <taxon>Arabidopsis</taxon>
    </lineage>
</organism>
<protein>
    <recommendedName>
        <fullName evidence="15">Homeobox-leucine zipper protein HDG11</fullName>
    </recommendedName>
    <alternativeName>
        <fullName evidence="15">HD-ZIP protein HDG11</fullName>
    </alternativeName>
    <alternativeName>
        <fullName evidence="12">Homeodomain GLABRA 2-like protein 11</fullName>
    </alternativeName>
    <alternativeName>
        <fullName evidence="15">Homeodomain transcription factor HDG11</fullName>
    </alternativeName>
    <alternativeName>
        <fullName evidence="14">Protein ENHANCED DROUGHT TOLERANCE 1</fullName>
    </alternativeName>
    <alternativeName>
        <fullName evidence="13">Protein HOMEODOMAIN GLABROUS 11</fullName>
    </alternativeName>
</protein>
<feature type="chain" id="PRO_0000331672" description="Homeobox-leucine zipper protein HDG11">
    <location>
        <begin position="1"/>
        <end position="722"/>
    </location>
</feature>
<feature type="domain" description="START" evidence="3">
    <location>
        <begin position="227"/>
        <end position="460"/>
    </location>
</feature>
<feature type="DNA-binding region" description="Homeobox" evidence="2">
    <location>
        <begin position="32"/>
        <end position="91"/>
    </location>
</feature>
<feature type="region of interest" description="Disordered" evidence="4">
    <location>
        <begin position="1"/>
        <end position="42"/>
    </location>
</feature>
<feature type="coiled-coil region" evidence="1">
    <location>
        <begin position="81"/>
        <end position="161"/>
    </location>
</feature>
<feature type="compositionally biased region" description="Gly residues" evidence="4">
    <location>
        <begin position="1"/>
        <end position="19"/>
    </location>
</feature>
<feature type="compositionally biased region" description="Basic and acidic residues" evidence="4">
    <location>
        <begin position="20"/>
        <end position="31"/>
    </location>
</feature>
<accession>Q9FX31</accession>